<sequence>MSAETATSPAPAAETPVAPAPATQTTPAEGAPTPAAAAPGGNTVSASLYVGELDPSVTEAMLFEIFNMIGPVASIRVCRDAVTRRSLGYAYVNYLNAADGERALEHLNYSLIKGQSCRIMWSQRDPALRKTGQGNIFIKNLDQSIDNKALHDTFAAFGDILSCKVGTDENGKSRGFAFVHYSTGEAADAAIKAVNGMLLNDKKVYVGHHVGKKERLSKVEELRAQFTNVYIKNVDLEVTDAEFEDLVKPFGPTISVALSRDEKGVSKGFGFVNYENHESARKAVDELNEKEVNGKKLYAGRAQTKSEREAELKKSHEEKRLENEAKSAGVNLYVKNLDDEWDDDRLRAEFEAFGTITSSKVMRDDSGVSRGFGFVCYSSPDEATKAVSEMNGKMIGTKPLYVALAQRKDVRRQALESQIAQRAQQRMQYGAGFPGMQGYMGQPMYGYPPMPGYGQPMPGMPPVRGPMMGYPGAPQNMMQSRPRFNPNGQPLPGGVPAYGMPPQVPYPGAPGYPVRPGGARIPAAPNANGPRNGGPSPVGAPQGLPAGSIPRGGQMPARPHEQAAPAPQAGRLDAQSLARAAPAEQKQMLGEALYPLIHETQPELAGKITGMLLEMDNAELLHLVESQPALQEKVDEALRVLAEWGKDEKPAADEGAEEPKKEEEETKEEEKKE</sequence>
<organism>
    <name type="scientific">Cryptococcus neoformans var. neoformans serotype D (strain B-3501A)</name>
    <name type="common">Filobasidiella neoformans</name>
    <dbReference type="NCBI Taxonomy" id="283643"/>
    <lineage>
        <taxon>Eukaryota</taxon>
        <taxon>Fungi</taxon>
        <taxon>Dikarya</taxon>
        <taxon>Basidiomycota</taxon>
        <taxon>Agaricomycotina</taxon>
        <taxon>Tremellomycetes</taxon>
        <taxon>Tremellales</taxon>
        <taxon>Cryptococcaceae</taxon>
        <taxon>Cryptococcus</taxon>
        <taxon>Cryptococcus neoformans species complex</taxon>
    </lineage>
</organism>
<comment type="function">
    <text evidence="1">Binds the poly(A) tail of mRNA. Appears to be an important mediator of the multiple roles of the poly(A) tail in mRNA biogenesis, stability and translation. In the nucleus, involved in both mRNA cleavage and polyadenylation. Is also required for efficient mRNA export to the cytoplasm. Acts in concert with a poly(A)-specific nuclease (PAN) to affect poly(A) tail shortening, which may occur concomitantly with either nucleocytoplasmic mRNA transport or translational initiation. In the cytoplasm, stimulates translation initiation and regulates mRNA decay through translation termination-coupled poly(A) shortening, probably mediated by PAN (By similarity).</text>
</comment>
<comment type="subcellular location">
    <subcellularLocation>
        <location evidence="1">Cytoplasm</location>
    </subcellularLocation>
    <subcellularLocation>
        <location evidence="1">Nucleus</location>
    </subcellularLocation>
</comment>
<comment type="similarity">
    <text evidence="5">Belongs to the polyadenylate-binding protein type-1 family.</text>
</comment>
<keyword id="KW-0963">Cytoplasm</keyword>
<keyword id="KW-0507">mRNA processing</keyword>
<keyword id="KW-0509">mRNA transport</keyword>
<keyword id="KW-0539">Nucleus</keyword>
<keyword id="KW-0677">Repeat</keyword>
<keyword id="KW-0694">RNA-binding</keyword>
<keyword id="KW-0810">Translation regulation</keyword>
<keyword id="KW-0813">Transport</keyword>
<dbReference type="EMBL" id="AAEY01000041">
    <property type="protein sequence ID" value="EAL19418.1"/>
    <property type="molecule type" value="Genomic_DNA"/>
</dbReference>
<dbReference type="RefSeq" id="XP_774065.1">
    <property type="nucleotide sequence ID" value="XM_768972.1"/>
</dbReference>
<dbReference type="SMR" id="P0CP47"/>
<dbReference type="EnsemblFungi" id="AAW45527">
    <property type="protein sequence ID" value="AAW45527"/>
    <property type="gene ID" value="CNI01160"/>
</dbReference>
<dbReference type="GeneID" id="4937630"/>
<dbReference type="KEGG" id="cnb:CNBH1100"/>
<dbReference type="VEuPathDB" id="FungiDB:CNBH1100"/>
<dbReference type="HOGENOM" id="CLU_012062_22_4_1"/>
<dbReference type="OrthoDB" id="8968at5206"/>
<dbReference type="GO" id="GO:0005737">
    <property type="term" value="C:cytoplasm"/>
    <property type="evidence" value="ECO:0007669"/>
    <property type="project" value="UniProtKB-SubCell"/>
</dbReference>
<dbReference type="GO" id="GO:0005634">
    <property type="term" value="C:nucleus"/>
    <property type="evidence" value="ECO:0007669"/>
    <property type="project" value="UniProtKB-SubCell"/>
</dbReference>
<dbReference type="GO" id="GO:0003723">
    <property type="term" value="F:RNA binding"/>
    <property type="evidence" value="ECO:0007669"/>
    <property type="project" value="UniProtKB-KW"/>
</dbReference>
<dbReference type="GO" id="GO:0006397">
    <property type="term" value="P:mRNA processing"/>
    <property type="evidence" value="ECO:0007669"/>
    <property type="project" value="UniProtKB-KW"/>
</dbReference>
<dbReference type="GO" id="GO:0051028">
    <property type="term" value="P:mRNA transport"/>
    <property type="evidence" value="ECO:0007669"/>
    <property type="project" value="UniProtKB-KW"/>
</dbReference>
<dbReference type="GO" id="GO:0006417">
    <property type="term" value="P:regulation of translation"/>
    <property type="evidence" value="ECO:0007669"/>
    <property type="project" value="UniProtKB-KW"/>
</dbReference>
<dbReference type="CDD" id="cd12378">
    <property type="entry name" value="RRM1_I_PABPs"/>
    <property type="match status" value="1"/>
</dbReference>
<dbReference type="CDD" id="cd12379">
    <property type="entry name" value="RRM2_I_PABPs"/>
    <property type="match status" value="1"/>
</dbReference>
<dbReference type="CDD" id="cd12380">
    <property type="entry name" value="RRM3_I_PABPs"/>
    <property type="match status" value="1"/>
</dbReference>
<dbReference type="CDD" id="cd12381">
    <property type="entry name" value="RRM4_I_PABPs"/>
    <property type="match status" value="1"/>
</dbReference>
<dbReference type="FunFam" id="1.10.1900.10:FF:000004">
    <property type="entry name" value="Polyadenylate-binding protein"/>
    <property type="match status" value="1"/>
</dbReference>
<dbReference type="FunFam" id="3.30.70.330:FF:000003">
    <property type="entry name" value="Polyadenylate-binding protein"/>
    <property type="match status" value="1"/>
</dbReference>
<dbReference type="FunFam" id="3.30.70.330:FF:000355">
    <property type="entry name" value="Polyadenylate-binding protein"/>
    <property type="match status" value="1"/>
</dbReference>
<dbReference type="FunFam" id="3.30.70.330:FF:000441">
    <property type="entry name" value="Polyadenylate-binding protein"/>
    <property type="match status" value="1"/>
</dbReference>
<dbReference type="FunFam" id="3.30.70.330:FF:000590">
    <property type="entry name" value="Polyadenylate-binding protein 5"/>
    <property type="match status" value="1"/>
</dbReference>
<dbReference type="Gene3D" id="3.30.70.330">
    <property type="match status" value="4"/>
</dbReference>
<dbReference type="Gene3D" id="1.10.1900.10">
    <property type="entry name" value="c-terminal domain of poly(a) binding protein"/>
    <property type="match status" value="1"/>
</dbReference>
<dbReference type="InterPro" id="IPR012677">
    <property type="entry name" value="Nucleotide-bd_a/b_plait_sf"/>
</dbReference>
<dbReference type="InterPro" id="IPR036053">
    <property type="entry name" value="PABP-dom"/>
</dbReference>
<dbReference type="InterPro" id="IPR006515">
    <property type="entry name" value="PABP_1234"/>
</dbReference>
<dbReference type="InterPro" id="IPR002004">
    <property type="entry name" value="PABP_HYD_C"/>
</dbReference>
<dbReference type="InterPro" id="IPR034364">
    <property type="entry name" value="PABP_RRM1"/>
</dbReference>
<dbReference type="InterPro" id="IPR035979">
    <property type="entry name" value="RBD_domain_sf"/>
</dbReference>
<dbReference type="InterPro" id="IPR045305">
    <property type="entry name" value="RRM2_I_PABPs"/>
</dbReference>
<dbReference type="InterPro" id="IPR000504">
    <property type="entry name" value="RRM_dom"/>
</dbReference>
<dbReference type="NCBIfam" id="TIGR01628">
    <property type="entry name" value="PABP-1234"/>
    <property type="match status" value="1"/>
</dbReference>
<dbReference type="PANTHER" id="PTHR24012">
    <property type="entry name" value="RNA BINDING PROTEIN"/>
    <property type="match status" value="1"/>
</dbReference>
<dbReference type="Pfam" id="PF00658">
    <property type="entry name" value="MLLE"/>
    <property type="match status" value="1"/>
</dbReference>
<dbReference type="Pfam" id="PF00076">
    <property type="entry name" value="RRM_1"/>
    <property type="match status" value="4"/>
</dbReference>
<dbReference type="SMART" id="SM00517">
    <property type="entry name" value="PolyA"/>
    <property type="match status" value="1"/>
</dbReference>
<dbReference type="SMART" id="SM00360">
    <property type="entry name" value="RRM"/>
    <property type="match status" value="4"/>
</dbReference>
<dbReference type="SUPFAM" id="SSF63570">
    <property type="entry name" value="PABC (PABP) domain"/>
    <property type="match status" value="1"/>
</dbReference>
<dbReference type="SUPFAM" id="SSF54928">
    <property type="entry name" value="RNA-binding domain, RBD"/>
    <property type="match status" value="2"/>
</dbReference>
<dbReference type="PROSITE" id="PS51309">
    <property type="entry name" value="PABC"/>
    <property type="match status" value="1"/>
</dbReference>
<dbReference type="PROSITE" id="PS50102">
    <property type="entry name" value="RRM"/>
    <property type="match status" value="4"/>
</dbReference>
<proteinExistence type="inferred from homology"/>
<reference key="1">
    <citation type="journal article" date="2005" name="Science">
        <title>The genome of the basidiomycetous yeast and human pathogen Cryptococcus neoformans.</title>
        <authorList>
            <person name="Loftus B.J."/>
            <person name="Fung E."/>
            <person name="Roncaglia P."/>
            <person name="Rowley D."/>
            <person name="Amedeo P."/>
            <person name="Bruno D."/>
            <person name="Vamathevan J."/>
            <person name="Miranda M."/>
            <person name="Anderson I.J."/>
            <person name="Fraser J.A."/>
            <person name="Allen J.E."/>
            <person name="Bosdet I.E."/>
            <person name="Brent M.R."/>
            <person name="Chiu R."/>
            <person name="Doering T.L."/>
            <person name="Donlin M.J."/>
            <person name="D'Souza C.A."/>
            <person name="Fox D.S."/>
            <person name="Grinberg V."/>
            <person name="Fu J."/>
            <person name="Fukushima M."/>
            <person name="Haas B.J."/>
            <person name="Huang J.C."/>
            <person name="Janbon G."/>
            <person name="Jones S.J.M."/>
            <person name="Koo H.L."/>
            <person name="Krzywinski M.I."/>
            <person name="Kwon-Chung K.J."/>
            <person name="Lengeler K.B."/>
            <person name="Maiti R."/>
            <person name="Marra M.A."/>
            <person name="Marra R.E."/>
            <person name="Mathewson C.A."/>
            <person name="Mitchell T.G."/>
            <person name="Pertea M."/>
            <person name="Riggs F.R."/>
            <person name="Salzberg S.L."/>
            <person name="Schein J.E."/>
            <person name="Shvartsbeyn A."/>
            <person name="Shin H."/>
            <person name="Shumway M."/>
            <person name="Specht C.A."/>
            <person name="Suh B.B."/>
            <person name="Tenney A."/>
            <person name="Utterback T.R."/>
            <person name="Wickes B.L."/>
            <person name="Wortman J.R."/>
            <person name="Wye N.H."/>
            <person name="Kronstad J.W."/>
            <person name="Lodge J.K."/>
            <person name="Heitman J."/>
            <person name="Davis R.W."/>
            <person name="Fraser C.M."/>
            <person name="Hyman R.W."/>
        </authorList>
    </citation>
    <scope>NUCLEOTIDE SEQUENCE [LARGE SCALE GENOMIC DNA]</scope>
    <source>
        <strain>B-3501A</strain>
    </source>
</reference>
<gene>
    <name type="primary">PAB1</name>
    <name type="ordered locus">CNBH1100</name>
</gene>
<name>PABP_CRYNB</name>
<protein>
    <recommendedName>
        <fullName>Polyadenylate-binding protein, cytoplasmic and nuclear</fullName>
        <shortName>PABP</shortName>
        <shortName>Poly(A)-binding protein</shortName>
    </recommendedName>
    <alternativeName>
        <fullName>Polyadenylate tail-binding protein</fullName>
    </alternativeName>
</protein>
<accession>P0CP47</accession>
<accession>Q55NH7</accession>
<accession>Q5KBW2</accession>
<evidence type="ECO:0000250" key="1"/>
<evidence type="ECO:0000255" key="2">
    <source>
        <dbReference type="PROSITE-ProRule" id="PRU00176"/>
    </source>
</evidence>
<evidence type="ECO:0000255" key="3">
    <source>
        <dbReference type="PROSITE-ProRule" id="PRU00641"/>
    </source>
</evidence>
<evidence type="ECO:0000256" key="4">
    <source>
        <dbReference type="SAM" id="MobiDB-lite"/>
    </source>
</evidence>
<evidence type="ECO:0000305" key="5"/>
<feature type="chain" id="PRO_0000410181" description="Polyadenylate-binding protein, cytoplasmic and nuclear">
    <location>
        <begin position="1"/>
        <end position="673"/>
    </location>
</feature>
<feature type="domain" description="RRM 1" evidence="2">
    <location>
        <begin position="46"/>
        <end position="124"/>
    </location>
</feature>
<feature type="domain" description="RRM 2" evidence="2">
    <location>
        <begin position="134"/>
        <end position="211"/>
    </location>
</feature>
<feature type="domain" description="RRM 3" evidence="2">
    <location>
        <begin position="227"/>
        <end position="304"/>
    </location>
</feature>
<feature type="domain" description="RRM 4" evidence="2">
    <location>
        <begin position="330"/>
        <end position="407"/>
    </location>
</feature>
<feature type="domain" description="PABC" evidence="3">
    <location>
        <begin position="569"/>
        <end position="646"/>
    </location>
</feature>
<feature type="region of interest" description="Disordered" evidence="4">
    <location>
        <begin position="1"/>
        <end position="39"/>
    </location>
</feature>
<feature type="region of interest" description="Disordered" evidence="4">
    <location>
        <begin position="300"/>
        <end position="322"/>
    </location>
</feature>
<feature type="region of interest" description="Disordered" evidence="4">
    <location>
        <begin position="509"/>
        <end position="572"/>
    </location>
</feature>
<feature type="region of interest" description="Disordered" evidence="4">
    <location>
        <begin position="644"/>
        <end position="673"/>
    </location>
</feature>
<feature type="compositionally biased region" description="Basic and acidic residues" evidence="4">
    <location>
        <begin position="304"/>
        <end position="322"/>
    </location>
</feature>